<reference key="1">
    <citation type="journal article" date="2001" name="Proc. Natl. Acad. Sci. U.S.A.">
        <title>Analysis of the chromosome sequence of the legume symbiont Sinorhizobium meliloti strain 1021.</title>
        <authorList>
            <person name="Capela D."/>
            <person name="Barloy-Hubler F."/>
            <person name="Gouzy J."/>
            <person name="Bothe G."/>
            <person name="Ampe F."/>
            <person name="Batut J."/>
            <person name="Boistard P."/>
            <person name="Becker A."/>
            <person name="Boutry M."/>
            <person name="Cadieu E."/>
            <person name="Dreano S."/>
            <person name="Gloux S."/>
            <person name="Godrie T."/>
            <person name="Goffeau A."/>
            <person name="Kahn D."/>
            <person name="Kiss E."/>
            <person name="Lelaure V."/>
            <person name="Masuy D."/>
            <person name="Pohl T."/>
            <person name="Portetelle D."/>
            <person name="Puehler A."/>
            <person name="Purnelle B."/>
            <person name="Ramsperger U."/>
            <person name="Renard C."/>
            <person name="Thebault P."/>
            <person name="Vandenbol M."/>
            <person name="Weidner S."/>
            <person name="Galibert F."/>
        </authorList>
    </citation>
    <scope>NUCLEOTIDE SEQUENCE [LARGE SCALE GENOMIC DNA]</scope>
    <source>
        <strain>1021</strain>
    </source>
</reference>
<reference key="2">
    <citation type="journal article" date="2001" name="Science">
        <title>The composite genome of the legume symbiont Sinorhizobium meliloti.</title>
        <authorList>
            <person name="Galibert F."/>
            <person name="Finan T.M."/>
            <person name="Long S.R."/>
            <person name="Puehler A."/>
            <person name="Abola P."/>
            <person name="Ampe F."/>
            <person name="Barloy-Hubler F."/>
            <person name="Barnett M.J."/>
            <person name="Becker A."/>
            <person name="Boistard P."/>
            <person name="Bothe G."/>
            <person name="Boutry M."/>
            <person name="Bowser L."/>
            <person name="Buhrmester J."/>
            <person name="Cadieu E."/>
            <person name="Capela D."/>
            <person name="Chain P."/>
            <person name="Cowie A."/>
            <person name="Davis R.W."/>
            <person name="Dreano S."/>
            <person name="Federspiel N.A."/>
            <person name="Fisher R.F."/>
            <person name="Gloux S."/>
            <person name="Godrie T."/>
            <person name="Goffeau A."/>
            <person name="Golding B."/>
            <person name="Gouzy J."/>
            <person name="Gurjal M."/>
            <person name="Hernandez-Lucas I."/>
            <person name="Hong A."/>
            <person name="Huizar L."/>
            <person name="Hyman R.W."/>
            <person name="Jones T."/>
            <person name="Kahn D."/>
            <person name="Kahn M.L."/>
            <person name="Kalman S."/>
            <person name="Keating D.H."/>
            <person name="Kiss E."/>
            <person name="Komp C."/>
            <person name="Lelaure V."/>
            <person name="Masuy D."/>
            <person name="Palm C."/>
            <person name="Peck M.C."/>
            <person name="Pohl T.M."/>
            <person name="Portetelle D."/>
            <person name="Purnelle B."/>
            <person name="Ramsperger U."/>
            <person name="Surzycki R."/>
            <person name="Thebault P."/>
            <person name="Vandenbol M."/>
            <person name="Vorhoelter F.J."/>
            <person name="Weidner S."/>
            <person name="Wells D.H."/>
            <person name="Wong K."/>
            <person name="Yeh K.-C."/>
            <person name="Batut J."/>
        </authorList>
    </citation>
    <scope>NUCLEOTIDE SEQUENCE [LARGE SCALE GENOMIC DNA]</scope>
    <source>
        <strain>1021</strain>
    </source>
</reference>
<accession>Q92LA6</accession>
<sequence>MSADAVFCELGARTNFSFLEGAAPAEEMVVFAKKAGLAGLGIADRNSVAGVVRAHAKAKVEGYPFQPGARLVFADGTPDILAYPKNRRGWGHLCRLLSAGNLRSKKGDCTLHLADLLEWQEELLLIVMQGEGRPEPESLEVLLGTLKEHAGNRLYLGLAPHYDGFDRHDFAVLAAIARKAGIGLLATNDALYHDPHYRPLADVVTSIREHVPIAGAGFLLQKNAERHLKGPREMARLFSDYPEAIANTRKFFRELAFSLDELSHQYPDENADGETPAESLRRLVAEGAAERYPEGVPEKVMRQIDYELELIHDKKYEPYFLTVHKLVKFARSVNILCQGRGSAANSSVCFCLGITDVDPQKFTLLFDRFLSKDRDEPPDIDVDFEHERREEVIQYIYRTYGKEHAGLTAAVISYRSRSAGREVAKAFGLSEDVQSALVSSIWGWGTSPFTEEQAKGAGLDAADPLTRRVLAYASLLMNFPRHLSQHVGGFVITRDRLDEVVPIMNTAMPDRYMIEWDKDDLDELKILKVDVLALGMLTCLAKGFKLLEAHYGEPITLAEIYQDHRDAVYDMICRADTVGVFQIESRAQMSMLPRLQPREMYDLVIEVAIVRPGPIQGNMVHPYLKRREAQRRGEAVVYPSPELKAVLERTLGVPLFQEQAMQIAITAAGFSPSEADRLRRAMATFKRTGTIHTFERKMVEGMVANDYEREFAERCFNQIKGFGEYGFPESHAASFASLVYASAWLKTYYPDIFCAALLNAQPMGFYAPAQLVRDAREHGVRMLPVDINHSDWDALLEGEGAFDKNAVHPRHASMREVIKTRKAVRLGFRLVKGLKQTDMKALVARRGEGYRSVHDLWLRSGLSRSVLERLADADAFRSIGLDRRAALWAVKALDEQSAVERLPLFEGAGSDDLQIEPKVALPDMPAGEQVIHDYRTLTLSLKAHPVSFMREDFSRRGILRSRDLAATATGRWVTVAGLVLVRQRPGSANGVIFMTIEDETGIANIIVWEKTFQKYRRQVMGSRLVKVRGRLQNQSGVIHVVADHLEDITPMLGLLRREARRFGVNDRADGALRPSADAREKKKLRQLRLGLPARAAPEGEAAAQVAEVMPKGRNFH</sequence>
<keyword id="KW-0963">Cytoplasm</keyword>
<keyword id="KW-0227">DNA damage</keyword>
<keyword id="KW-0234">DNA repair</keyword>
<keyword id="KW-0235">DNA replication</keyword>
<keyword id="KW-0239">DNA-directed DNA polymerase</keyword>
<keyword id="KW-0548">Nucleotidyltransferase</keyword>
<keyword id="KW-1185">Reference proteome</keyword>
<keyword id="KW-0808">Transferase</keyword>
<name>DNE21_RHIME</name>
<gene>
    <name evidence="1" type="primary">dnaE2-1</name>
    <name type="ordered locus">R03171</name>
    <name type="ORF">SMc03788</name>
</gene>
<protein>
    <recommendedName>
        <fullName evidence="1">Error-prone DNA polymerase 1</fullName>
        <ecNumber evidence="1">2.7.7.7</ecNumber>
    </recommendedName>
</protein>
<feature type="chain" id="PRO_0000103395" description="Error-prone DNA polymerase 1">
    <location>
        <begin position="1"/>
        <end position="1116"/>
    </location>
</feature>
<organism>
    <name type="scientific">Rhizobium meliloti (strain 1021)</name>
    <name type="common">Ensifer meliloti</name>
    <name type="synonym">Sinorhizobium meliloti</name>
    <dbReference type="NCBI Taxonomy" id="266834"/>
    <lineage>
        <taxon>Bacteria</taxon>
        <taxon>Pseudomonadati</taxon>
        <taxon>Pseudomonadota</taxon>
        <taxon>Alphaproteobacteria</taxon>
        <taxon>Hyphomicrobiales</taxon>
        <taxon>Rhizobiaceae</taxon>
        <taxon>Sinorhizobium/Ensifer group</taxon>
        <taxon>Sinorhizobium</taxon>
    </lineage>
</organism>
<proteinExistence type="inferred from homology"/>
<comment type="function">
    <text evidence="1">DNA polymerase involved in damage-induced mutagenesis and translesion synthesis (TLS). It is not the major replicative DNA polymerase.</text>
</comment>
<comment type="catalytic activity">
    <reaction evidence="1">
        <text>DNA(n) + a 2'-deoxyribonucleoside 5'-triphosphate = DNA(n+1) + diphosphate</text>
        <dbReference type="Rhea" id="RHEA:22508"/>
        <dbReference type="Rhea" id="RHEA-COMP:17339"/>
        <dbReference type="Rhea" id="RHEA-COMP:17340"/>
        <dbReference type="ChEBI" id="CHEBI:33019"/>
        <dbReference type="ChEBI" id="CHEBI:61560"/>
        <dbReference type="ChEBI" id="CHEBI:173112"/>
        <dbReference type="EC" id="2.7.7.7"/>
    </reaction>
</comment>
<comment type="subcellular location">
    <subcellularLocation>
        <location evidence="1">Cytoplasm</location>
    </subcellularLocation>
</comment>
<comment type="similarity">
    <text evidence="1">Belongs to the DNA polymerase type-C family. DnaE2 subfamily.</text>
</comment>
<dbReference type="EC" id="2.7.7.7" evidence="1"/>
<dbReference type="EMBL" id="AL591688">
    <property type="protein sequence ID" value="CAC47750.1"/>
    <property type="molecule type" value="Genomic_DNA"/>
</dbReference>
<dbReference type="RefSeq" id="NP_387277.1">
    <property type="nucleotide sequence ID" value="NC_003047.1"/>
</dbReference>
<dbReference type="RefSeq" id="WP_010970470.1">
    <property type="nucleotide sequence ID" value="NC_003047.1"/>
</dbReference>
<dbReference type="SMR" id="Q92LA6"/>
<dbReference type="EnsemblBacteria" id="CAC47750">
    <property type="protein sequence ID" value="CAC47750"/>
    <property type="gene ID" value="SMc03788"/>
</dbReference>
<dbReference type="KEGG" id="sme:SMc03788"/>
<dbReference type="PATRIC" id="fig|266834.11.peg.4720"/>
<dbReference type="eggNOG" id="COG0587">
    <property type="taxonomic scope" value="Bacteria"/>
</dbReference>
<dbReference type="HOGENOM" id="CLU_001600_4_0_5"/>
<dbReference type="OrthoDB" id="9803237at2"/>
<dbReference type="Proteomes" id="UP000001976">
    <property type="component" value="Chromosome"/>
</dbReference>
<dbReference type="GO" id="GO:0005737">
    <property type="term" value="C:cytoplasm"/>
    <property type="evidence" value="ECO:0007669"/>
    <property type="project" value="UniProtKB-SubCell"/>
</dbReference>
<dbReference type="GO" id="GO:0008408">
    <property type="term" value="F:3'-5' exonuclease activity"/>
    <property type="evidence" value="ECO:0007669"/>
    <property type="project" value="InterPro"/>
</dbReference>
<dbReference type="GO" id="GO:0003887">
    <property type="term" value="F:DNA-directed DNA polymerase activity"/>
    <property type="evidence" value="ECO:0007669"/>
    <property type="project" value="UniProtKB-UniRule"/>
</dbReference>
<dbReference type="GO" id="GO:0003676">
    <property type="term" value="F:nucleic acid binding"/>
    <property type="evidence" value="ECO:0007669"/>
    <property type="project" value="InterPro"/>
</dbReference>
<dbReference type="GO" id="GO:0006281">
    <property type="term" value="P:DNA repair"/>
    <property type="evidence" value="ECO:0007669"/>
    <property type="project" value="UniProtKB-UniRule"/>
</dbReference>
<dbReference type="GO" id="GO:0006260">
    <property type="term" value="P:DNA replication"/>
    <property type="evidence" value="ECO:0007669"/>
    <property type="project" value="UniProtKB-KW"/>
</dbReference>
<dbReference type="GO" id="GO:0009432">
    <property type="term" value="P:SOS response"/>
    <property type="evidence" value="ECO:0000269"/>
    <property type="project" value="CollecTF"/>
</dbReference>
<dbReference type="CDD" id="cd04485">
    <property type="entry name" value="DnaE_OBF"/>
    <property type="match status" value="1"/>
</dbReference>
<dbReference type="CDD" id="cd07434">
    <property type="entry name" value="PHP_PolIIIA_DnaE2"/>
    <property type="match status" value="1"/>
</dbReference>
<dbReference type="FunFam" id="1.10.150.870:FF:000002">
    <property type="entry name" value="Error-prone DNA polymerase"/>
    <property type="match status" value="1"/>
</dbReference>
<dbReference type="Gene3D" id="1.10.150.870">
    <property type="match status" value="1"/>
</dbReference>
<dbReference type="Gene3D" id="3.20.20.140">
    <property type="entry name" value="Metal-dependent hydrolases"/>
    <property type="match status" value="1"/>
</dbReference>
<dbReference type="HAMAP" id="MF_01902">
    <property type="entry name" value="DNApol_error_prone"/>
    <property type="match status" value="1"/>
</dbReference>
<dbReference type="InterPro" id="IPR011708">
    <property type="entry name" value="DNA_pol3_alpha_NTPase_dom"/>
</dbReference>
<dbReference type="InterPro" id="IPR040982">
    <property type="entry name" value="DNA_pol3_finger"/>
</dbReference>
<dbReference type="InterPro" id="IPR023073">
    <property type="entry name" value="DnaE2"/>
</dbReference>
<dbReference type="InterPro" id="IPR004805">
    <property type="entry name" value="DnaE2/DnaE/PolC"/>
</dbReference>
<dbReference type="InterPro" id="IPR029460">
    <property type="entry name" value="DNAPol_HHH"/>
</dbReference>
<dbReference type="InterPro" id="IPR004365">
    <property type="entry name" value="NA-bd_OB_tRNA"/>
</dbReference>
<dbReference type="InterPro" id="IPR004013">
    <property type="entry name" value="PHP_dom"/>
</dbReference>
<dbReference type="InterPro" id="IPR003141">
    <property type="entry name" value="Pol/His_phosphatase_N"/>
</dbReference>
<dbReference type="InterPro" id="IPR016195">
    <property type="entry name" value="Pol/histidinol_Pase-like"/>
</dbReference>
<dbReference type="NCBIfam" id="TIGR00594">
    <property type="entry name" value="polc"/>
    <property type="match status" value="1"/>
</dbReference>
<dbReference type="NCBIfam" id="NF004225">
    <property type="entry name" value="PRK05672.1"/>
    <property type="match status" value="1"/>
</dbReference>
<dbReference type="PANTHER" id="PTHR32294">
    <property type="entry name" value="DNA POLYMERASE III SUBUNIT ALPHA"/>
    <property type="match status" value="1"/>
</dbReference>
<dbReference type="PANTHER" id="PTHR32294:SF4">
    <property type="entry name" value="ERROR-PRONE DNA POLYMERASE"/>
    <property type="match status" value="1"/>
</dbReference>
<dbReference type="Pfam" id="PF07733">
    <property type="entry name" value="DNA_pol3_alpha"/>
    <property type="match status" value="1"/>
</dbReference>
<dbReference type="Pfam" id="PF17657">
    <property type="entry name" value="DNA_pol3_finger"/>
    <property type="match status" value="1"/>
</dbReference>
<dbReference type="Pfam" id="PF14579">
    <property type="entry name" value="HHH_6"/>
    <property type="match status" value="1"/>
</dbReference>
<dbReference type="Pfam" id="PF02811">
    <property type="entry name" value="PHP"/>
    <property type="match status" value="1"/>
</dbReference>
<dbReference type="Pfam" id="PF01336">
    <property type="entry name" value="tRNA_anti-codon"/>
    <property type="match status" value="1"/>
</dbReference>
<dbReference type="SMART" id="SM00481">
    <property type="entry name" value="POLIIIAc"/>
    <property type="match status" value="1"/>
</dbReference>
<dbReference type="SUPFAM" id="SSF89550">
    <property type="entry name" value="PHP domain-like"/>
    <property type="match status" value="1"/>
</dbReference>
<evidence type="ECO:0000255" key="1">
    <source>
        <dbReference type="HAMAP-Rule" id="MF_01902"/>
    </source>
</evidence>